<gene>
    <name type="primary">yegT</name>
    <name type="ordered locus">b2098</name>
    <name type="ordered locus">JW2085</name>
</gene>
<feature type="chain" id="PRO_0000169130" description="Putative nucleoside transporter YegT">
    <location>
        <begin position="1"/>
        <end position="425"/>
    </location>
</feature>
<feature type="topological domain" description="Periplasmic" evidence="2">
    <location>
        <begin position="1"/>
        <end position="8"/>
    </location>
</feature>
<feature type="transmembrane region" description="Helical" evidence="2">
    <location>
        <begin position="9"/>
        <end position="29"/>
    </location>
</feature>
<feature type="topological domain" description="Cytoplasmic" evidence="2">
    <location>
        <begin position="30"/>
        <end position="38"/>
    </location>
</feature>
<feature type="transmembrane region" description="Helical" evidence="2">
    <location>
        <begin position="39"/>
        <end position="59"/>
    </location>
</feature>
<feature type="topological domain" description="Periplasmic" evidence="2">
    <location>
        <begin position="60"/>
        <end position="63"/>
    </location>
</feature>
<feature type="transmembrane region" description="Helical" evidence="2">
    <location>
        <begin position="64"/>
        <end position="84"/>
    </location>
</feature>
<feature type="topological domain" description="Cytoplasmic" evidence="2">
    <location>
        <begin position="85"/>
        <end position="90"/>
    </location>
</feature>
<feature type="transmembrane region" description="Helical" evidence="2">
    <location>
        <begin position="91"/>
        <end position="111"/>
    </location>
</feature>
<feature type="topological domain" description="Periplasmic" evidence="2">
    <location>
        <begin position="112"/>
        <end position="131"/>
    </location>
</feature>
<feature type="transmembrane region" description="Helical" evidence="2">
    <location>
        <begin position="132"/>
        <end position="152"/>
    </location>
</feature>
<feature type="topological domain" description="Cytoplasmic" evidence="2">
    <location>
        <begin position="153"/>
        <end position="161"/>
    </location>
</feature>
<feature type="transmembrane region" description="Helical" evidence="2">
    <location>
        <begin position="162"/>
        <end position="182"/>
    </location>
</feature>
<feature type="topological domain" description="Periplasmic" evidence="2">
    <location>
        <begin position="183"/>
        <end position="210"/>
    </location>
</feature>
<feature type="transmembrane region" description="Helical" evidence="2">
    <location>
        <begin position="211"/>
        <end position="231"/>
    </location>
</feature>
<feature type="topological domain" description="Cytoplasmic" evidence="2">
    <location>
        <begin position="232"/>
        <end position="244"/>
    </location>
</feature>
<feature type="transmembrane region" description="Helical" evidence="2">
    <location>
        <begin position="245"/>
        <end position="265"/>
    </location>
</feature>
<feature type="topological domain" description="Periplasmic" evidence="2">
    <location>
        <begin position="266"/>
        <end position="287"/>
    </location>
</feature>
<feature type="transmembrane region" description="Helical" evidence="2">
    <location>
        <begin position="288"/>
        <end position="308"/>
    </location>
</feature>
<feature type="topological domain" description="Cytoplasmic" evidence="2">
    <location>
        <begin position="309"/>
        <end position="339"/>
    </location>
</feature>
<feature type="transmembrane region" description="Helical" evidence="2">
    <location>
        <begin position="340"/>
        <end position="360"/>
    </location>
</feature>
<feature type="topological domain" description="Periplasmic" evidence="2">
    <location>
        <begin position="361"/>
        <end position="379"/>
    </location>
</feature>
<feature type="transmembrane region" description="Helical" evidence="2">
    <location>
        <begin position="380"/>
        <end position="400"/>
    </location>
</feature>
<feature type="topological domain" description="Cytoplasmic" evidence="2">
    <location>
        <begin position="401"/>
        <end position="425"/>
    </location>
</feature>
<dbReference type="EMBL" id="U00096">
    <property type="protein sequence ID" value="AAC75159.1"/>
    <property type="molecule type" value="Genomic_DNA"/>
</dbReference>
<dbReference type="EMBL" id="AP009048">
    <property type="protein sequence ID" value="BAA15967.1"/>
    <property type="molecule type" value="Genomic_DNA"/>
</dbReference>
<dbReference type="PIR" id="A64977">
    <property type="entry name" value="A64977"/>
</dbReference>
<dbReference type="RefSeq" id="NP_416601.1">
    <property type="nucleotide sequence ID" value="NC_000913.3"/>
</dbReference>
<dbReference type="RefSeq" id="WP_000858484.1">
    <property type="nucleotide sequence ID" value="NZ_SSZK01000011.1"/>
</dbReference>
<dbReference type="SMR" id="P76417"/>
<dbReference type="BioGRID" id="4261530">
    <property type="interactions" value="123"/>
</dbReference>
<dbReference type="DIP" id="DIP-11890N"/>
<dbReference type="FunCoup" id="P76417">
    <property type="interactions" value="136"/>
</dbReference>
<dbReference type="IntAct" id="P76417">
    <property type="interactions" value="1"/>
</dbReference>
<dbReference type="STRING" id="511145.b2098"/>
<dbReference type="TCDB" id="2.A.1.10.3">
    <property type="family name" value="the major facilitator superfamily (mfs)"/>
</dbReference>
<dbReference type="PaxDb" id="511145-b2098"/>
<dbReference type="EnsemblBacteria" id="AAC75159">
    <property type="protein sequence ID" value="AAC75159"/>
    <property type="gene ID" value="b2098"/>
</dbReference>
<dbReference type="GeneID" id="946638"/>
<dbReference type="KEGG" id="ecj:JW2085"/>
<dbReference type="KEGG" id="eco:b2098"/>
<dbReference type="KEGG" id="ecoc:C3026_11775"/>
<dbReference type="PATRIC" id="fig|1411691.4.peg.149"/>
<dbReference type="EchoBASE" id="EB3816"/>
<dbReference type="eggNOG" id="COG2211">
    <property type="taxonomic scope" value="Bacteria"/>
</dbReference>
<dbReference type="HOGENOM" id="CLU_013133_1_2_6"/>
<dbReference type="InParanoid" id="P76417"/>
<dbReference type="OMA" id="MFAYKEP"/>
<dbReference type="OrthoDB" id="9783013at2"/>
<dbReference type="PhylomeDB" id="P76417"/>
<dbReference type="BioCyc" id="EcoCyc:B2098-MONOMER"/>
<dbReference type="PRO" id="PR:P76417"/>
<dbReference type="Proteomes" id="UP000000625">
    <property type="component" value="Chromosome"/>
</dbReference>
<dbReference type="GO" id="GO:0005886">
    <property type="term" value="C:plasma membrane"/>
    <property type="evidence" value="ECO:0000314"/>
    <property type="project" value="EcoCyc"/>
</dbReference>
<dbReference type="GO" id="GO:0015212">
    <property type="term" value="F:cytidine transmembrane transporter activity"/>
    <property type="evidence" value="ECO:0000318"/>
    <property type="project" value="GO_Central"/>
</dbReference>
<dbReference type="GO" id="GO:0015213">
    <property type="term" value="F:uridine transmembrane transporter activity"/>
    <property type="evidence" value="ECO:0000318"/>
    <property type="project" value="GO_Central"/>
</dbReference>
<dbReference type="CDD" id="cd06177">
    <property type="entry name" value="MFS_NHS"/>
    <property type="match status" value="1"/>
</dbReference>
<dbReference type="FunFam" id="1.20.1250.20:FF:000076">
    <property type="entry name" value="Nucleoside transporter YegT"/>
    <property type="match status" value="1"/>
</dbReference>
<dbReference type="FunFam" id="1.20.1250.20:FF:000074">
    <property type="entry name" value="Nucleoside transporter yegT"/>
    <property type="match status" value="1"/>
</dbReference>
<dbReference type="Gene3D" id="1.20.1250.20">
    <property type="entry name" value="MFS general substrate transporter like domains"/>
    <property type="match status" value="2"/>
</dbReference>
<dbReference type="InterPro" id="IPR020846">
    <property type="entry name" value="MFS_dom"/>
</dbReference>
<dbReference type="InterPro" id="IPR036259">
    <property type="entry name" value="MFS_trans_sf"/>
</dbReference>
<dbReference type="InterPro" id="IPR004740">
    <property type="entry name" value="Nuc_H_symport"/>
</dbReference>
<dbReference type="NCBIfam" id="TIGR00889">
    <property type="entry name" value="2A0110"/>
    <property type="match status" value="1"/>
</dbReference>
<dbReference type="PANTHER" id="PTHR23522">
    <property type="entry name" value="BLL5896 PROTEIN"/>
    <property type="match status" value="1"/>
</dbReference>
<dbReference type="PANTHER" id="PTHR23522:SF4">
    <property type="entry name" value="NUCLEOSIDE PERMEASE NUPG-RELATED"/>
    <property type="match status" value="1"/>
</dbReference>
<dbReference type="Pfam" id="PF03825">
    <property type="entry name" value="Nuc_H_symport"/>
    <property type="match status" value="1"/>
</dbReference>
<dbReference type="SUPFAM" id="SSF103473">
    <property type="entry name" value="MFS general substrate transporter"/>
    <property type="match status" value="1"/>
</dbReference>
<dbReference type="PROSITE" id="PS50850">
    <property type="entry name" value="MFS"/>
    <property type="match status" value="1"/>
</dbReference>
<accession>P76417</accession>
<accession>O08013</accession>
<reference key="1">
    <citation type="journal article" date="1996" name="DNA Res.">
        <title>A 460-kb DNA sequence of the Escherichia coli K-12 genome corresponding to the 40.1-50.0 min region on the linkage map.</title>
        <authorList>
            <person name="Itoh T."/>
            <person name="Aiba H."/>
            <person name="Baba T."/>
            <person name="Fujita K."/>
            <person name="Hayashi K."/>
            <person name="Inada T."/>
            <person name="Isono K."/>
            <person name="Kasai H."/>
            <person name="Kimura S."/>
            <person name="Kitakawa M."/>
            <person name="Kitagawa M."/>
            <person name="Makino K."/>
            <person name="Miki T."/>
            <person name="Mizobuchi K."/>
            <person name="Mori H."/>
            <person name="Mori T."/>
            <person name="Motomura K."/>
            <person name="Nakade S."/>
            <person name="Nakamura Y."/>
            <person name="Nashimoto H."/>
            <person name="Nishio Y."/>
            <person name="Oshima T."/>
            <person name="Saito N."/>
            <person name="Sampei G."/>
            <person name="Seki Y."/>
            <person name="Sivasundaram S."/>
            <person name="Tagami H."/>
            <person name="Takeda J."/>
            <person name="Takemoto K."/>
            <person name="Wada C."/>
            <person name="Yamamoto Y."/>
            <person name="Horiuchi T."/>
        </authorList>
    </citation>
    <scope>NUCLEOTIDE SEQUENCE [LARGE SCALE GENOMIC DNA]</scope>
    <source>
        <strain>K12 / W3110 / ATCC 27325 / DSM 5911</strain>
    </source>
</reference>
<reference key="2">
    <citation type="journal article" date="1997" name="Science">
        <title>The complete genome sequence of Escherichia coli K-12.</title>
        <authorList>
            <person name="Blattner F.R."/>
            <person name="Plunkett G. III"/>
            <person name="Bloch C.A."/>
            <person name="Perna N.T."/>
            <person name="Burland V."/>
            <person name="Riley M."/>
            <person name="Collado-Vides J."/>
            <person name="Glasner J.D."/>
            <person name="Rode C.K."/>
            <person name="Mayhew G.F."/>
            <person name="Gregor J."/>
            <person name="Davis N.W."/>
            <person name="Kirkpatrick H.A."/>
            <person name="Goeden M.A."/>
            <person name="Rose D.J."/>
            <person name="Mau B."/>
            <person name="Shao Y."/>
        </authorList>
    </citation>
    <scope>NUCLEOTIDE SEQUENCE [LARGE SCALE GENOMIC DNA]</scope>
    <source>
        <strain>K12 / MG1655 / ATCC 47076</strain>
    </source>
</reference>
<reference key="3">
    <citation type="journal article" date="2006" name="Mol. Syst. Biol.">
        <title>Highly accurate genome sequences of Escherichia coli K-12 strains MG1655 and W3110.</title>
        <authorList>
            <person name="Hayashi K."/>
            <person name="Morooka N."/>
            <person name="Yamamoto Y."/>
            <person name="Fujita K."/>
            <person name="Isono K."/>
            <person name="Choi S."/>
            <person name="Ohtsubo E."/>
            <person name="Baba T."/>
            <person name="Wanner B.L."/>
            <person name="Mori H."/>
            <person name="Horiuchi T."/>
        </authorList>
    </citation>
    <scope>NUCLEOTIDE SEQUENCE [LARGE SCALE GENOMIC DNA]</scope>
    <source>
        <strain>K12 / W3110 / ATCC 27325 / DSM 5911</strain>
    </source>
</reference>
<reference key="4">
    <citation type="journal article" date="2005" name="Science">
        <title>Global topology analysis of the Escherichia coli inner membrane proteome.</title>
        <authorList>
            <person name="Daley D.O."/>
            <person name="Rapp M."/>
            <person name="Granseth E."/>
            <person name="Melen K."/>
            <person name="Drew D."/>
            <person name="von Heijne G."/>
        </authorList>
    </citation>
    <scope>TOPOLOGY [LARGE SCALE ANALYSIS]</scope>
    <source>
        <strain>K12 / MG1655 / ATCC 47076</strain>
    </source>
</reference>
<organism>
    <name type="scientific">Escherichia coli (strain K12)</name>
    <dbReference type="NCBI Taxonomy" id="83333"/>
    <lineage>
        <taxon>Bacteria</taxon>
        <taxon>Pseudomonadati</taxon>
        <taxon>Pseudomonadota</taxon>
        <taxon>Gammaproteobacteria</taxon>
        <taxon>Enterobacterales</taxon>
        <taxon>Enterobacteriaceae</taxon>
        <taxon>Escherichia</taxon>
    </lineage>
</organism>
<protein>
    <recommendedName>
        <fullName>Putative nucleoside transporter YegT</fullName>
    </recommendedName>
</protein>
<keyword id="KW-0997">Cell inner membrane</keyword>
<keyword id="KW-1003">Cell membrane</keyword>
<keyword id="KW-0472">Membrane</keyword>
<keyword id="KW-1185">Reference proteome</keyword>
<keyword id="KW-0812">Transmembrane</keyword>
<keyword id="KW-1133">Transmembrane helix</keyword>
<keyword id="KW-0813">Transport</keyword>
<sequence length="425" mass="47359">MKTTAKLSFMMFVEWFIWGAWFVPLWLWLSKSGFSAGEIGWSYACTAIAAILSPILVGSITDRFFSAQKVLAVLMFAGALLMYFAAQQTTFAGFFPLLLAYSLTYMPTIALTNSIAFANVPDVERDFPRIRVMGTIGWIASGLACGFLPQILGYADISPTNIPLLITAGSSALLGVFAFFLPDTPPKSTGKMDIKVMLGLDALILLRDKNFLVFFFCSFLFAMPLAFYYIFANGYLTEVGMKNATGWMTLGQFSEIFFMLALPFFTKRFGIKKVLLLGLVTAAIRYGFFIYGSADEYFTYALLFLGILLHGVSYDFYYVTAYIYVDKKAPVHMRTAAQGLITLCCQGFGSLLGYRLGGVMMEKMFAYQEPVNGLTFNWSGMWTFGAVMIAIIAVLFMIFFRESDNEITAIKVDDRDIALTQGEVK</sequence>
<proteinExistence type="evidence at protein level"/>
<evidence type="ECO:0000250" key="1"/>
<evidence type="ECO:0000255" key="2"/>
<evidence type="ECO:0000305" key="3"/>
<name>YEGT_ECOLI</name>
<comment type="function">
    <text evidence="1">Could be involved in nucleoside transport.</text>
</comment>
<comment type="subcellular location">
    <subcellularLocation>
        <location>Cell inner membrane</location>
        <topology>Multi-pass membrane protein</topology>
    </subcellularLocation>
</comment>
<comment type="similarity">
    <text evidence="3">Belongs to the major facilitator superfamily. Nucleoside:H(+) symporter (NHS) (TC 2.A.1.10) family.</text>
</comment>